<proteinExistence type="evidence at protein level"/>
<dbReference type="GO" id="GO:0005576">
    <property type="term" value="C:extracellular region"/>
    <property type="evidence" value="ECO:0007669"/>
    <property type="project" value="UniProtKB-SubCell"/>
</dbReference>
<dbReference type="GO" id="GO:0007218">
    <property type="term" value="P:neuropeptide signaling pathway"/>
    <property type="evidence" value="ECO:0007669"/>
    <property type="project" value="UniProtKB-KW"/>
</dbReference>
<dbReference type="InterPro" id="IPR013231">
    <property type="entry name" value="Periviscerokinin"/>
</dbReference>
<dbReference type="Pfam" id="PF08259">
    <property type="entry name" value="Periviscerokin"/>
    <property type="match status" value="1"/>
</dbReference>
<accession>P84423</accession>
<evidence type="ECO:0000255" key="1"/>
<evidence type="ECO:0000269" key="2">
    <source>
    </source>
</evidence>
<evidence type="ECO:0000269" key="3">
    <source>
    </source>
</evidence>
<evidence type="ECO:0000305" key="4"/>
<comment type="function">
    <text evidence="4">Mediates visceral muscle contractile activity (myotropic activity).</text>
</comment>
<comment type="subcellular location">
    <subcellularLocation>
        <location evidence="4">Secreted</location>
    </subcellularLocation>
</comment>
<comment type="mass spectrometry"/>
<comment type="similarity">
    <text evidence="1">Belongs to the periviscerokinin family.</text>
</comment>
<reference evidence="4" key="1">
    <citation type="journal article" date="2005" name="Peptides">
        <title>Peptidomics of neurohemal organs from species of the cockroach family Blattidae: how do neuropeptides of closely related species differ?</title>
        <authorList>
            <person name="Predel R."/>
            <person name="Gaede G."/>
        </authorList>
    </citation>
    <scope>PROTEIN SEQUENCE</scope>
    <scope>MASS SPECTROMETRY</scope>
    <scope>AMIDATION AT VAL-11</scope>
    <source>
        <tissue evidence="2">Abdominal perisympathetic organs</tissue>
    </source>
</reference>
<reference key="2">
    <citation type="journal article" date="2009" name="BMC Evol. Biol.">
        <title>A proteomic approach for studying insect phylogeny: CAPA peptides of ancient insect taxa (Dictyoptera, Blattoptera) as a test case.</title>
        <authorList>
            <person name="Roth S."/>
            <person name="Fromm B."/>
            <person name="Gaede G."/>
            <person name="Predel R."/>
        </authorList>
    </citation>
    <scope>PROTEIN SEQUENCE</scope>
    <scope>AMIDATION AT VAL-11</scope>
    <source>
        <tissue>Abdominal perisympathetic organs</tissue>
    </source>
</reference>
<feature type="peptide" id="PRO_0000044273" description="Periviscerokinin-2.2">
    <location>
        <begin position="1"/>
        <end position="11"/>
    </location>
</feature>
<feature type="modified residue" description="Valine amide" evidence="2 3">
    <location>
        <position position="11"/>
    </location>
</feature>
<keyword id="KW-0027">Amidation</keyword>
<keyword id="KW-0903">Direct protein sequencing</keyword>
<keyword id="KW-0527">Neuropeptide</keyword>
<keyword id="KW-0964">Secreted</keyword>
<organism>
    <name type="scientific">Periplaneta brunnea</name>
    <name type="common">Brown cockroach</name>
    <dbReference type="NCBI Taxonomy" id="36976"/>
    <lineage>
        <taxon>Eukaryota</taxon>
        <taxon>Metazoa</taxon>
        <taxon>Ecdysozoa</taxon>
        <taxon>Arthropoda</taxon>
        <taxon>Hexapoda</taxon>
        <taxon>Insecta</taxon>
        <taxon>Pterygota</taxon>
        <taxon>Neoptera</taxon>
        <taxon>Polyneoptera</taxon>
        <taxon>Dictyoptera</taxon>
        <taxon>Blattodea</taxon>
        <taxon>Blattoidea</taxon>
        <taxon>Blattidae</taxon>
        <taxon>Blattinae</taxon>
        <taxon>Periplaneta</taxon>
    </lineage>
</organism>
<sequence>GSSGLISMPRV</sequence>
<protein>
    <recommendedName>
        <fullName>Periviscerokinin-2.2</fullName>
    </recommendedName>
    <alternativeName>
        <fullName>Lem-PVK-2-like peptide</fullName>
    </alternativeName>
    <alternativeName>
        <fullName>Periviscerokinin-2</fullName>
        <shortName>PerBr-PVK-2</shortName>
    </alternativeName>
</protein>
<name>PVK22_PERBR</name>